<comment type="function">
    <text evidence="1 4 5 9 10 11 12">Minor protein of the capsid that localizes along the inner surface of the virion, within the central cavities beneath the L1 pentamers. Plays a role in capsid stabilization through interaction with the major capsid protein L1. Once the virion enters the host cell, L2 escorts the genomic DNA into the nucleus by promoting escape from the endosomal compartments and traffic through the host Golgi network. Mechanistically, the C-terminus of L2 possesses a cell-penetrating peptide that protudes from the host endosome, interacts with host cytoplasmic retromer cargo and thereby mediates the capsid delivery to the host trans-Golgi network. Plays a role through its interaction with host dynein in the intracellular microtubule-dependent transport of viral capsid toward the nucleus. Mediates the viral genome import into the nucleus through binding to host importins. Once within the nucleus, L2 localizes viral genomes to host PML bodies in order to activate early gene expression for establishment of infection. Later on, promotes late gene expression by interacting with the viral E2 protein and by inhibiting its transcriptional activation functions. During virion assembly, encapsidates the genome by direct interaction with the viral DNA.</text>
</comment>
<comment type="subunit">
    <text evidence="1 2 3 4 5 6 9 10 11">Interacts with major capsid protein L1. Interacts with E2; this interaction inhibits E2 transcriptional activity but not the DNA replication function E2. Interacts with host GADD45GIP1. Interacts with host HSPA8; this interaction is required for L2 nuclear translocation. Interacts with host importins KPNB2 and KPNB3. Forms a complex with importin alpha2-beta1 heterodimers via interaction with the importin alpha2 adapter. Interacts with host DYNLT1; this interaction is essential for virus intracellular transport during entry. Interacts (via C-terminus) with host retromer subunits VPS35 and VPS29.</text>
</comment>
<comment type="interaction">
    <interactant intactId="EBI-7362531">
        <id>P03107</id>
    </interactant>
    <interactant intactId="EBI-349938">
        <id>P52292</id>
        <label>KPNA2</label>
    </interactant>
    <organismsDiffer>true</organismsDiffer>
    <experiments>3</experiments>
</comment>
<comment type="interaction">
    <interactant intactId="EBI-7362531">
        <id>P03107</id>
    </interactant>
    <interactant intactId="EBI-286758">
        <id>Q14974</id>
        <label>KPNB1</label>
    </interactant>
    <organismsDiffer>true</organismsDiffer>
    <experiments>2</experiments>
</comment>
<comment type="subcellular location">
    <subcellularLocation>
        <location evidence="1 7">Virion</location>
    </subcellularLocation>
    <subcellularLocation>
        <location evidence="1 7">Host nucleus</location>
    </subcellularLocation>
    <subcellularLocation>
        <location evidence="10 11">Host early endosome</location>
    </subcellularLocation>
    <subcellularLocation>
        <location evidence="10 11">Host Golgi apparatus</location>
    </subcellularLocation>
</comment>
<comment type="PTM">
    <text evidence="1 6">Highly phosphorylated.</text>
</comment>
<comment type="miscellaneous">
    <text>HPV16, in comparison to HPV types 6 and 11, is more often associated with malignant genital cancers in humans.</text>
</comment>
<comment type="similarity">
    <text evidence="1">Belongs to the papillomaviridae L2 protein family.</text>
</comment>
<reference key="1">
    <citation type="journal article" date="1985" name="Virology">
        <title>Human papillomavirus type 16 DNA sequence.</title>
        <authorList>
            <person name="Seedorf K."/>
            <person name="Krammer G."/>
            <person name="Durst M."/>
            <person name="Suhai S."/>
            <person name="Rowekamp W.G."/>
        </authorList>
    </citation>
    <scope>NUCLEOTIDE SEQUENCE [GENOMIC DNA]</scope>
</reference>
<reference key="2">
    <citation type="submission" date="2002-08" db="EMBL/GenBank/DDBJ databases">
        <title>Cloning and sequencing of non-European human papillomavirus (HPV) variant complete genomes from cervicovaginal cells by an overlapping PCR method.</title>
        <authorList>
            <person name="Terai M."/>
            <person name="Fu L."/>
            <person name="Ma Z."/>
            <person name="Burk R.D."/>
        </authorList>
    </citation>
    <scope>NUCLEOTIDE SEQUENCE [GENOMIC DNA]</scope>
    <source>
        <strain>Isolate European German 131</strain>
    </source>
</reference>
<reference key="3">
    <citation type="journal article" date="1991" name="J. Gen. Virol.">
        <title>Baculovirus expression of the human papillomavirus type 16 capsid proteins: detection of L1-L2 protein complexes.</title>
        <authorList>
            <person name="Xi S.Z."/>
            <person name="Banks L.M."/>
        </authorList>
    </citation>
    <scope>INTERACTION WITH PROTEIN L1</scope>
    <scope>PHOSPHORYLATION</scope>
</reference>
<reference key="4">
    <citation type="journal article" date="2002" name="Virology">
        <title>Interaction of human papillomavirus type 16 L2 with cellular proteins: identification of novel nuclear body-associated proteins.</title>
        <authorList>
            <person name="Goernemann J."/>
            <person name="Hofmann T.G."/>
            <person name="Will H."/>
            <person name="Mueller M."/>
        </authorList>
    </citation>
    <scope>INTERACTION WITH HUMAN GADD45GIP1</scope>
    <source>
        <tissue>Keratinocyte</tissue>
    </source>
</reference>
<reference key="5">
    <citation type="journal article" date="1994" name="J. Virol.">
        <title>Interaction of human papillomavirus (HPV) type 16 capsid proteins with HPV DNA requires an intact L2 N-terminal sequence.</title>
        <authorList>
            <person name="Zhou J."/>
            <person name="Sun X.Y."/>
            <person name="Louis K."/>
            <person name="Frazer I.H."/>
        </authorList>
    </citation>
    <scope>DNA-BINDING</scope>
</reference>
<reference key="6">
    <citation type="journal article" date="1995" name="Virology">
        <title>Human papillomavirus type 16 capsid proteins produced from recombinant Semliki Forest virus assemble into virus-like particles.</title>
        <authorList>
            <person name="Heino P."/>
            <person name="Dillner J."/>
            <person name="Schwartz S."/>
        </authorList>
    </citation>
    <scope>FUNCTION</scope>
</reference>
<reference key="7">
    <citation type="journal article" date="2004" name="J. Virol.">
        <title>Nuclear translocation of papillomavirus minor capsid protein L2 requires Hsc70.</title>
        <authorList>
            <person name="Florin L."/>
            <person name="Becker K.A."/>
            <person name="Sapp C."/>
            <person name="Lambert C."/>
            <person name="Sirma H."/>
            <person name="Muller M."/>
            <person name="Streeck R.E."/>
            <person name="Sapp M."/>
        </authorList>
    </citation>
    <scope>INTERACTION WITH HOST HSPA8</scope>
</reference>
<reference key="8">
    <citation type="journal article" date="2004" name="J. Virol.">
        <title>The l2 minor capsid protein of human papillomavirus type 16 interacts with a network of nuclear import receptors.</title>
        <authorList>
            <person name="Darshan M.S."/>
            <person name="Lucchi J."/>
            <person name="Harding E."/>
            <person name="Moroianu J."/>
        </authorList>
    </citation>
    <scope>FUNCTION</scope>
    <scope>INTERACTION WITH IMPORTINS KPNB2 AND KPNB3</scope>
    <scope>NUCLEAR LOCALIZATION SIGNALS</scope>
</reference>
<reference key="9">
    <citation type="journal article" date="2005" name="Virus Res.">
        <title>Human papillomavirus 16 L2 inhibits the transcriptional activation function, but not the DNA replication function, of HPV-16 E2.</title>
        <authorList>
            <person name="Okoye A."/>
            <person name="Cordano P."/>
            <person name="Taylor E.R."/>
            <person name="Morgan I.M."/>
            <person name="Everett R."/>
            <person name="Campo M.S."/>
        </authorList>
    </citation>
    <scope>FUNCTION</scope>
    <scope>INTERACTION WITH E2</scope>
</reference>
<reference key="10">
    <citation type="journal article" date="2009" name="Am. J. Pathol.">
        <title>Expression pattern and subcellular localization of human papillomavirus minor capsid protein L2.</title>
        <authorList>
            <person name="Lin Z."/>
            <person name="Yemelyanova A.V."/>
            <person name="Gambhira R."/>
            <person name="Jagu S."/>
            <person name="Meyers C."/>
            <person name="Kirnbauer R."/>
            <person name="Ronnett B.M."/>
            <person name="Gravitt P.E."/>
            <person name="Roden R.B."/>
        </authorList>
    </citation>
    <scope>SUBCELLULAR LOCATION</scope>
</reference>
<reference key="11">
    <citation type="journal article" date="2009" name="PLoS ONE">
        <title>Two highly conserved cysteine residues in HPV16 L2 form an intramolecular disulfide bond and are critical for infectivity in human keratinocytes.</title>
        <authorList>
            <person name="Campos S.K."/>
            <person name="Ozbun M.A."/>
        </authorList>
    </citation>
    <scope>MUTAGENESIS OF CYS-22 AND CYS-28</scope>
    <scope>DISULFIDE BOND</scope>
</reference>
<reference key="12">
    <citation type="journal article" date="2011" name="Cell. Microbiol.">
        <title>Identification of the dynein light chains required for human papillomavirus infection.</title>
        <authorList>
            <person name="Schneider M.A."/>
            <person name="Spoden G.A."/>
            <person name="Florin L."/>
            <person name="Lambert C."/>
        </authorList>
    </citation>
    <scope>FUNCTION</scope>
    <scope>INTERACTION WITH HUMAN DYNLT1</scope>
</reference>
<reference key="13">
    <citation type="journal article" date="2015" name="Viruses">
        <title>Cleavage of the HPV16 minor capsid protein L2 during virion morphogenesis ablates the requirement for cellular furin during De Novo infection.</title>
        <authorList>
            <person name="Cruz L."/>
            <person name="Biryukov J."/>
            <person name="Conway M.J."/>
            <person name="Meyers C."/>
        </authorList>
    </citation>
    <scope>CLEAVAGE BY HOST FURIN</scope>
</reference>
<reference key="14">
    <citation type="journal article" date="2015" name="PLoS Pathog.">
        <title>Direct binding of retromer to human papillomavirus type 16 minor capsid protein L2 mediates endosome exit during viral infection.</title>
        <authorList>
            <person name="Popa A."/>
            <person name="Zhang W."/>
            <person name="Harrison M.S."/>
            <person name="Goodner K."/>
            <person name="Kazakov T."/>
            <person name="Goodwin E.C."/>
            <person name="Lipovsky A."/>
            <person name="Burd C.G."/>
            <person name="DiMaio D."/>
        </authorList>
    </citation>
    <scope>FUNCTION</scope>
    <scope>INTERACTION WITH HOST VPS35 AND VPS29</scope>
    <scope>SUBCELLULAR LOCATION</scope>
    <scope>MUTAGENESIS OF 446-PHE--LEU-448 AND 452-TYR--LEU-455</scope>
</reference>
<reference key="15">
    <citation type="journal article" date="2018" name="Cell">
        <title>Cell-Penetrating Peptide Mediates Intracellular Membrane Passage of Human Papillomavirus L2 Protein to Trigger Retrograde Trafficking.</title>
        <authorList>
            <person name="Zhang P."/>
            <person name="Monteiro da Silva G."/>
            <person name="Deatherage C."/>
            <person name="Burd C."/>
            <person name="DiMaio D."/>
        </authorList>
    </citation>
    <scope>FUNCTION</scope>
    <scope>INTERACTION WITH HOST VPS35</scope>
    <scope>SUBCELLULAR LOCATION</scope>
    <scope>MUTAGENESIS OF LYS-457</scope>
</reference>
<name>VL2_HPV16</name>
<keyword id="KW-0167">Capsid protein</keyword>
<keyword id="KW-1176">Cytoplasmic inwards viral transport</keyword>
<keyword id="KW-1015">Disulfide bond</keyword>
<keyword id="KW-0238">DNA-binding</keyword>
<keyword id="KW-1039">Host endosome</keyword>
<keyword id="KW-1040">Host Golgi apparatus</keyword>
<keyword id="KW-1048">Host nucleus</keyword>
<keyword id="KW-0945">Host-virus interaction</keyword>
<keyword id="KW-0426">Late protein</keyword>
<keyword id="KW-1177">Microtubular inwards viral transport</keyword>
<keyword id="KW-0597">Phosphoprotein</keyword>
<keyword id="KW-1185">Reference proteome</keyword>
<keyword id="KW-1163">Viral penetration into host nucleus</keyword>
<keyword id="KW-0946">Virion</keyword>
<keyword id="KW-1160">Virus entry into host cell</keyword>
<sequence>MRHKRSAKRTKRASATQLYKTCKQAGTCPPDIIPKVEGKTIAEQILQYGSMGVFFGGLGIGTGSGTGGRTGYIPLGTRPPTATDTLAPVRPPLTVDPVGPSDPSIVSLVEETSFIDAGAPTSVPSIPPDVSGFSITTSTDTTPAILDINNTVTTVTTHNNPTFTDPSVLQPPTPAETGGHFTLSSSTISTHNYEEIPMDTFIVSTNPNTVTSSTPIPGSRPVARLGLYSRTTQQVKVVDPAFVTTPTKLITYDNPAYEGIDVDNTLYFSSNDNSINIAPDPDFLDIVALHRPALTSRRTGIRYSRIGNKQTLRTRSGKSIGAKVHYYYDLSTIDPAEEIELQTITPSTYTTTSHAASPTSINNGLYDIYADDFITDTSTTPVPSVPSTSLSGYIPANTTIPFGGAYNIPLVSGPDIPINITDQAPSLIPIVPGSPQYTIIADAGDFYLHPSYYMLRKRRKRLPYFFSDVSLAA</sequence>
<gene>
    <name evidence="1" type="primary">L2</name>
</gene>
<protein>
    <recommendedName>
        <fullName evidence="1">Minor capsid protein L2</fullName>
    </recommendedName>
</protein>
<feature type="chain" id="PRO_0000133583" description="Minor capsid protein L2">
    <location>
        <begin position="1"/>
        <end position="473"/>
    </location>
</feature>
<feature type="short sequence motif" description="Nuclear localization signal" evidence="1 14">
    <location>
        <begin position="1"/>
        <end position="13"/>
    </location>
</feature>
<feature type="short sequence motif" description="Nuclear localization signal" evidence="1 14">
    <location>
        <begin position="454"/>
        <end position="462"/>
    </location>
</feature>
<feature type="disulfide bond" evidence="1 8">
    <location>
        <begin position="22"/>
        <end position="28"/>
    </location>
</feature>
<feature type="mutagenesis site" description="Complete loss of infectivity." evidence="8">
    <original>C</original>
    <variation>S</variation>
    <location>
        <position position="22"/>
    </location>
</feature>
<feature type="mutagenesis site" description="Complete loss of infectivity." evidence="8">
    <original>C</original>
    <variation>S</variation>
    <location>
        <position position="28"/>
    </location>
</feature>
<feature type="mutagenesis site" description="Complete loss of interaction with host VPS35." evidence="10">
    <original>FYL</original>
    <variation>AAA</variation>
    <location>
        <begin position="446"/>
        <end position="448"/>
    </location>
</feature>
<feature type="mutagenesis site" description="Complete loss of interaction with host VPS35." evidence="10">
    <original>YYML</original>
    <variation>AAAA</variation>
    <location>
        <begin position="452"/>
        <end position="455"/>
    </location>
</feature>
<feature type="mutagenesis site" description="Complete loss of host Golgi localization." evidence="11">
    <original>K</original>
    <variation>R</variation>
    <location>
        <position position="457"/>
    </location>
</feature>
<feature type="sequence conflict" description="In Ref. 2; AAQ10718." evidence="13" ref="2">
    <original>E</original>
    <variation>D</variation>
    <location>
        <position position="43"/>
    </location>
</feature>
<feature type="sequence conflict" description="In Ref. 2; AAQ10718." evidence="13" ref="2">
    <original>S</original>
    <variation>P</variation>
    <location>
        <position position="269"/>
    </location>
</feature>
<feature type="sequence conflict" description="In Ref. 2; AAQ10718." evidence="13" ref="2">
    <original>S</original>
    <variation>L</variation>
    <location>
        <position position="353"/>
    </location>
</feature>
<accession>P03107</accession>
<accession>Q71BI1</accession>
<proteinExistence type="evidence at protein level"/>
<dbReference type="EMBL" id="K02718">
    <property type="protein sequence ID" value="AAA46942.1"/>
    <property type="molecule type" value="Genomic_DNA"/>
</dbReference>
<dbReference type="EMBL" id="AF536179">
    <property type="protein sequence ID" value="AAQ10718.1"/>
    <property type="molecule type" value="Genomic_DNA"/>
</dbReference>
<dbReference type="PIR" id="A03649">
    <property type="entry name" value="P2WLHS"/>
</dbReference>
<dbReference type="BioGRID" id="4263560">
    <property type="interactions" value="8"/>
</dbReference>
<dbReference type="ELM" id="P03107"/>
<dbReference type="IntAct" id="P03107">
    <property type="interactions" value="4"/>
</dbReference>
<dbReference type="MINT" id="P03107"/>
<dbReference type="TCDB" id="1.A.86.1.1">
    <property type="family name" value="the human papilloma virus type 16 (hpv16) l2 viroporin (l2 viroporin) family"/>
</dbReference>
<dbReference type="ABCD" id="P03107">
    <property type="antibodies" value="2 sequenced antibodies"/>
</dbReference>
<dbReference type="Proteomes" id="UP000009251">
    <property type="component" value="Segment"/>
</dbReference>
<dbReference type="Proteomes" id="UP000106302">
    <property type="component" value="Genome"/>
</dbReference>
<dbReference type="GO" id="GO:0043657">
    <property type="term" value="C:host cell"/>
    <property type="evidence" value="ECO:0007669"/>
    <property type="project" value="GOC"/>
</dbReference>
<dbReference type="GO" id="GO:0044174">
    <property type="term" value="C:host cell endosome"/>
    <property type="evidence" value="ECO:0007669"/>
    <property type="project" value="UniProtKB-KW"/>
</dbReference>
<dbReference type="GO" id="GO:0044177">
    <property type="term" value="C:host cell Golgi apparatus"/>
    <property type="evidence" value="ECO:0007669"/>
    <property type="project" value="UniProtKB-SubCell"/>
</dbReference>
<dbReference type="GO" id="GO:0042025">
    <property type="term" value="C:host cell nucleus"/>
    <property type="evidence" value="ECO:0007669"/>
    <property type="project" value="UniProtKB-SubCell"/>
</dbReference>
<dbReference type="GO" id="GO:0019028">
    <property type="term" value="C:viral capsid"/>
    <property type="evidence" value="ECO:0007669"/>
    <property type="project" value="UniProtKB-UniRule"/>
</dbReference>
<dbReference type="GO" id="GO:0003677">
    <property type="term" value="F:DNA binding"/>
    <property type="evidence" value="ECO:0007669"/>
    <property type="project" value="UniProtKB-UniRule"/>
</dbReference>
<dbReference type="GO" id="GO:0005198">
    <property type="term" value="F:structural molecule activity"/>
    <property type="evidence" value="ECO:0007669"/>
    <property type="project" value="UniProtKB-UniRule"/>
</dbReference>
<dbReference type="GO" id="GO:0075521">
    <property type="term" value="P:microtubule-dependent intracellular transport of viral material towards nucleus"/>
    <property type="evidence" value="ECO:0007669"/>
    <property type="project" value="UniProtKB-UniRule"/>
</dbReference>
<dbReference type="GO" id="GO:0046718">
    <property type="term" value="P:symbiont entry into host cell"/>
    <property type="evidence" value="ECO:0007669"/>
    <property type="project" value="UniProtKB-KW"/>
</dbReference>
<dbReference type="GO" id="GO:0075732">
    <property type="term" value="P:viral penetration into host nucleus"/>
    <property type="evidence" value="ECO:0007669"/>
    <property type="project" value="UniProtKB-KW"/>
</dbReference>
<dbReference type="HAMAP" id="MF_04003">
    <property type="entry name" value="PPV_L2"/>
    <property type="match status" value="1"/>
</dbReference>
<dbReference type="InterPro" id="IPR000784">
    <property type="entry name" value="Late_L2"/>
</dbReference>
<dbReference type="Pfam" id="PF00513">
    <property type="entry name" value="Late_protein_L2"/>
    <property type="match status" value="2"/>
</dbReference>
<evidence type="ECO:0000255" key="1">
    <source>
        <dbReference type="HAMAP-Rule" id="MF_04003"/>
    </source>
</evidence>
<evidence type="ECO:0000269" key="2">
    <source>
    </source>
</evidence>
<evidence type="ECO:0000269" key="3">
    <source>
    </source>
</evidence>
<evidence type="ECO:0000269" key="4">
    <source>
    </source>
</evidence>
<evidence type="ECO:0000269" key="5">
    <source>
    </source>
</evidence>
<evidence type="ECO:0000269" key="6">
    <source>
    </source>
</evidence>
<evidence type="ECO:0000269" key="7">
    <source>
    </source>
</evidence>
<evidence type="ECO:0000269" key="8">
    <source>
    </source>
</evidence>
<evidence type="ECO:0000269" key="9">
    <source>
    </source>
</evidence>
<evidence type="ECO:0000269" key="10">
    <source>
    </source>
</evidence>
<evidence type="ECO:0000269" key="11">
    <source>
    </source>
</evidence>
<evidence type="ECO:0000269" key="12">
    <source>
    </source>
</evidence>
<evidence type="ECO:0000305" key="13"/>
<evidence type="ECO:0000305" key="14">
    <source>
    </source>
</evidence>
<organism>
    <name type="scientific">Human papillomavirus type 16</name>
    <dbReference type="NCBI Taxonomy" id="333760"/>
    <lineage>
        <taxon>Viruses</taxon>
        <taxon>Monodnaviria</taxon>
        <taxon>Shotokuvirae</taxon>
        <taxon>Cossaviricota</taxon>
        <taxon>Papovaviricetes</taxon>
        <taxon>Zurhausenvirales</taxon>
        <taxon>Papillomaviridae</taxon>
        <taxon>Firstpapillomavirinae</taxon>
        <taxon>Alphapapillomavirus</taxon>
        <taxon>Alphapapillomavirus 9</taxon>
    </lineage>
</organism>
<organismHost>
    <name type="scientific">Homo sapiens</name>
    <name type="common">Human</name>
    <dbReference type="NCBI Taxonomy" id="9606"/>
</organismHost>